<dbReference type="EMBL" id="BX897700">
    <property type="protein sequence ID" value="CAF26685.1"/>
    <property type="molecule type" value="Genomic_DNA"/>
</dbReference>
<dbReference type="RefSeq" id="WP_011179855.1">
    <property type="nucleotide sequence ID" value="NC_005955.1"/>
</dbReference>
<dbReference type="SMR" id="Q6FYM0"/>
<dbReference type="KEGG" id="bqu:BQ12260"/>
<dbReference type="eggNOG" id="COG0712">
    <property type="taxonomic scope" value="Bacteria"/>
</dbReference>
<dbReference type="HOGENOM" id="CLU_085114_0_1_5"/>
<dbReference type="OrthoDB" id="9796185at2"/>
<dbReference type="Proteomes" id="UP000000597">
    <property type="component" value="Chromosome"/>
</dbReference>
<dbReference type="GO" id="GO:0005886">
    <property type="term" value="C:plasma membrane"/>
    <property type="evidence" value="ECO:0007669"/>
    <property type="project" value="UniProtKB-SubCell"/>
</dbReference>
<dbReference type="GO" id="GO:0045259">
    <property type="term" value="C:proton-transporting ATP synthase complex"/>
    <property type="evidence" value="ECO:0007669"/>
    <property type="project" value="UniProtKB-KW"/>
</dbReference>
<dbReference type="GO" id="GO:0046933">
    <property type="term" value="F:proton-transporting ATP synthase activity, rotational mechanism"/>
    <property type="evidence" value="ECO:0007669"/>
    <property type="project" value="UniProtKB-UniRule"/>
</dbReference>
<dbReference type="Gene3D" id="1.10.520.20">
    <property type="entry name" value="N-terminal domain of the delta subunit of the F1F0-ATP synthase"/>
    <property type="match status" value="1"/>
</dbReference>
<dbReference type="HAMAP" id="MF_01416">
    <property type="entry name" value="ATP_synth_delta_bact"/>
    <property type="match status" value="1"/>
</dbReference>
<dbReference type="InterPro" id="IPR026015">
    <property type="entry name" value="ATP_synth_OSCP/delta_N_sf"/>
</dbReference>
<dbReference type="InterPro" id="IPR020781">
    <property type="entry name" value="ATPase_OSCP/d_CS"/>
</dbReference>
<dbReference type="InterPro" id="IPR000711">
    <property type="entry name" value="ATPase_OSCP/dsu"/>
</dbReference>
<dbReference type="NCBIfam" id="TIGR01145">
    <property type="entry name" value="ATP_synt_delta"/>
    <property type="match status" value="1"/>
</dbReference>
<dbReference type="PANTHER" id="PTHR11910">
    <property type="entry name" value="ATP SYNTHASE DELTA CHAIN"/>
    <property type="match status" value="1"/>
</dbReference>
<dbReference type="Pfam" id="PF00213">
    <property type="entry name" value="OSCP"/>
    <property type="match status" value="1"/>
</dbReference>
<dbReference type="PRINTS" id="PR00125">
    <property type="entry name" value="ATPASEDELTA"/>
</dbReference>
<dbReference type="SUPFAM" id="SSF47928">
    <property type="entry name" value="N-terminal domain of the delta subunit of the F1F0-ATP synthase"/>
    <property type="match status" value="1"/>
</dbReference>
<dbReference type="PROSITE" id="PS00389">
    <property type="entry name" value="ATPASE_DELTA"/>
    <property type="match status" value="1"/>
</dbReference>
<feature type="chain" id="PRO_0000370898" description="ATP synthase subunit delta">
    <location>
        <begin position="1"/>
        <end position="194"/>
    </location>
</feature>
<name>ATPD_BARQU</name>
<comment type="function">
    <text evidence="1">F(1)F(0) ATP synthase produces ATP from ADP in the presence of a proton or sodium gradient. F-type ATPases consist of two structural domains, F(1) containing the extramembraneous catalytic core and F(0) containing the membrane proton channel, linked together by a central stalk and a peripheral stalk. During catalysis, ATP synthesis in the catalytic domain of F(1) is coupled via a rotary mechanism of the central stalk subunits to proton translocation.</text>
</comment>
<comment type="function">
    <text evidence="1">This protein is part of the stalk that links CF(0) to CF(1). It either transmits conformational changes from CF(0) to CF(1) or is implicated in proton conduction.</text>
</comment>
<comment type="subunit">
    <text evidence="1">F-type ATPases have 2 components, F(1) - the catalytic core - and F(0) - the membrane proton channel. F(1) has five subunits: alpha(3), beta(3), gamma(1), delta(1), epsilon(1). F(0) has three main subunits: a(1), b(2) and c(10-14). The alpha and beta chains form an alternating ring which encloses part of the gamma chain. F(1) is attached to F(0) by a central stalk formed by the gamma and epsilon chains, while a peripheral stalk is formed by the delta and b chains.</text>
</comment>
<comment type="subcellular location">
    <subcellularLocation>
        <location evidence="1">Cell inner membrane</location>
        <topology evidence="1">Peripheral membrane protein</topology>
    </subcellularLocation>
</comment>
<comment type="similarity">
    <text evidence="1">Belongs to the ATPase delta chain family.</text>
</comment>
<sequence length="194" mass="21614">MSDSFALIPLPLVDQRYAQALFDFVQEARSVENVEKAVASFLVVLDQHEDLKRFVQSPFFSIKEQIKVMRSVCENIKFADQGAGQILSNFLRVITVNRRLCALSGILQAFQHRVALSRREVSAQIISARPLSSHQEEELRVALEGVVRGKVLLHMCVDPTILGGLIIRLGSSQIDTSLVTKLSSLKLALKKEVS</sequence>
<organism>
    <name type="scientific">Bartonella quintana (strain Toulouse)</name>
    <name type="common">Rochalimaea quintana</name>
    <dbReference type="NCBI Taxonomy" id="283165"/>
    <lineage>
        <taxon>Bacteria</taxon>
        <taxon>Pseudomonadati</taxon>
        <taxon>Pseudomonadota</taxon>
        <taxon>Alphaproteobacteria</taxon>
        <taxon>Hyphomicrobiales</taxon>
        <taxon>Bartonellaceae</taxon>
        <taxon>Bartonella</taxon>
    </lineage>
</organism>
<gene>
    <name evidence="1" type="primary">atpH</name>
    <name type="ordered locus">BQ12260</name>
</gene>
<reference key="1">
    <citation type="journal article" date="2004" name="Proc. Natl. Acad. Sci. U.S.A.">
        <title>The louse-borne human pathogen Bartonella quintana is a genomic derivative of the zoonotic agent Bartonella henselae.</title>
        <authorList>
            <person name="Alsmark U.C.M."/>
            <person name="Frank A.C."/>
            <person name="Karlberg E.O."/>
            <person name="Legault B.-A."/>
            <person name="Ardell D.H."/>
            <person name="Canbaeck B."/>
            <person name="Eriksson A.-S."/>
            <person name="Naeslund A.K."/>
            <person name="Handley S.A."/>
            <person name="Huvet M."/>
            <person name="La Scola B."/>
            <person name="Holmberg M."/>
            <person name="Andersson S.G.E."/>
        </authorList>
    </citation>
    <scope>NUCLEOTIDE SEQUENCE [LARGE SCALE GENOMIC DNA]</scope>
    <source>
        <strain>Toulouse</strain>
    </source>
</reference>
<accession>Q6FYM0</accession>
<protein>
    <recommendedName>
        <fullName evidence="1">ATP synthase subunit delta</fullName>
    </recommendedName>
    <alternativeName>
        <fullName evidence="1">ATP synthase F(1) sector subunit delta</fullName>
    </alternativeName>
    <alternativeName>
        <fullName evidence="1">F-type ATPase subunit delta</fullName>
        <shortName evidence="1">F-ATPase subunit delta</shortName>
    </alternativeName>
</protein>
<evidence type="ECO:0000255" key="1">
    <source>
        <dbReference type="HAMAP-Rule" id="MF_01416"/>
    </source>
</evidence>
<keyword id="KW-0066">ATP synthesis</keyword>
<keyword id="KW-0997">Cell inner membrane</keyword>
<keyword id="KW-1003">Cell membrane</keyword>
<keyword id="KW-0139">CF(1)</keyword>
<keyword id="KW-0375">Hydrogen ion transport</keyword>
<keyword id="KW-0406">Ion transport</keyword>
<keyword id="KW-0472">Membrane</keyword>
<keyword id="KW-0813">Transport</keyword>
<proteinExistence type="inferred from homology"/>